<organism>
    <name type="scientific">Methanocaldococcus jannaschii (strain ATCC 43067 / DSM 2661 / JAL-1 / JCM 10045 / NBRC 100440)</name>
    <name type="common">Methanococcus jannaschii</name>
    <dbReference type="NCBI Taxonomy" id="243232"/>
    <lineage>
        <taxon>Archaea</taxon>
        <taxon>Methanobacteriati</taxon>
        <taxon>Methanobacteriota</taxon>
        <taxon>Methanomada group</taxon>
        <taxon>Methanococci</taxon>
        <taxon>Methanococcales</taxon>
        <taxon>Methanocaldococcaceae</taxon>
        <taxon>Methanocaldococcus</taxon>
    </lineage>
</organism>
<comment type="subcellular location">
    <subcellularLocation>
        <location evidence="2">Membrane</location>
        <topology evidence="2">Single-pass membrane protein</topology>
    </subcellularLocation>
</comment>
<sequence length="135" mass="14803">MKRLGVFLILASIVCGVVAICGCTGGGGTDYSSSTASAETETCPVQILEHHLVRKDYGTVYVEGVAQNVGNKRLKFVEIKARFYDADGVLIDEFMDVHRDVDPGQKFRFKIIGPIGEEGKKVAKYDIAVGTWWTE</sequence>
<evidence type="ECO:0000255" key="1"/>
<evidence type="ECO:0000305" key="2"/>
<feature type="chain" id="PRO_0000106831" description="Uncharacterized protein MJ0360">
    <location>
        <begin position="1"/>
        <end position="135"/>
    </location>
</feature>
<feature type="transmembrane region" description="Helical" evidence="1">
    <location>
        <begin position="4"/>
        <end position="24"/>
    </location>
</feature>
<reference key="1">
    <citation type="journal article" date="1996" name="Science">
        <title>Complete genome sequence of the methanogenic archaeon, Methanococcus jannaschii.</title>
        <authorList>
            <person name="Bult C.J."/>
            <person name="White O."/>
            <person name="Olsen G.J."/>
            <person name="Zhou L."/>
            <person name="Fleischmann R.D."/>
            <person name="Sutton G.G."/>
            <person name="Blake J.A."/>
            <person name="FitzGerald L.M."/>
            <person name="Clayton R.A."/>
            <person name="Gocayne J.D."/>
            <person name="Kerlavage A.R."/>
            <person name="Dougherty B.A."/>
            <person name="Tomb J.-F."/>
            <person name="Adams M.D."/>
            <person name="Reich C.I."/>
            <person name="Overbeek R."/>
            <person name="Kirkness E.F."/>
            <person name="Weinstock K.G."/>
            <person name="Merrick J.M."/>
            <person name="Glodek A."/>
            <person name="Scott J.L."/>
            <person name="Geoghagen N.S.M."/>
            <person name="Weidman J.F."/>
            <person name="Fuhrmann J.L."/>
            <person name="Nguyen D."/>
            <person name="Utterback T.R."/>
            <person name="Kelley J.M."/>
            <person name="Peterson J.D."/>
            <person name="Sadow P.W."/>
            <person name="Hanna M.C."/>
            <person name="Cotton M.D."/>
            <person name="Roberts K.M."/>
            <person name="Hurst M.A."/>
            <person name="Kaine B.P."/>
            <person name="Borodovsky M."/>
            <person name="Klenk H.-P."/>
            <person name="Fraser C.M."/>
            <person name="Smith H.O."/>
            <person name="Woese C.R."/>
            <person name="Venter J.C."/>
        </authorList>
    </citation>
    <scope>NUCLEOTIDE SEQUENCE [LARGE SCALE GENOMIC DNA]</scope>
    <source>
        <strain>ATCC 43067 / DSM 2661 / JAL-1 / JCM 10045 / NBRC 100440</strain>
    </source>
</reference>
<gene>
    <name type="ordered locus">MJ0360</name>
</gene>
<proteinExistence type="predicted"/>
<accession>Q57806</accession>
<protein>
    <recommendedName>
        <fullName>Uncharacterized protein MJ0360</fullName>
    </recommendedName>
</protein>
<name>Y360_METJA</name>
<dbReference type="EMBL" id="L77117">
    <property type="protein sequence ID" value="AAB98352.1"/>
    <property type="molecule type" value="Genomic_DNA"/>
</dbReference>
<dbReference type="PIR" id="H64344">
    <property type="entry name" value="H64344"/>
</dbReference>
<dbReference type="RefSeq" id="WP_010869859.1">
    <property type="nucleotide sequence ID" value="NC_000909.1"/>
</dbReference>
<dbReference type="SMR" id="Q57806"/>
<dbReference type="STRING" id="243232.MJ_0360"/>
<dbReference type="PaxDb" id="243232-MJ_0360"/>
<dbReference type="EnsemblBacteria" id="AAB98352">
    <property type="protein sequence ID" value="AAB98352"/>
    <property type="gene ID" value="MJ_0360"/>
</dbReference>
<dbReference type="GeneID" id="1451217"/>
<dbReference type="KEGG" id="mja:MJ_0360"/>
<dbReference type="eggNOG" id="arCOG10172">
    <property type="taxonomic scope" value="Archaea"/>
</dbReference>
<dbReference type="HOGENOM" id="CLU_1881086_0_0_2"/>
<dbReference type="InParanoid" id="Q57806"/>
<dbReference type="OrthoDB" id="212718at2157"/>
<dbReference type="Proteomes" id="UP000000805">
    <property type="component" value="Chromosome"/>
</dbReference>
<dbReference type="GO" id="GO:0016020">
    <property type="term" value="C:membrane"/>
    <property type="evidence" value="ECO:0007669"/>
    <property type="project" value="UniProtKB-SubCell"/>
</dbReference>
<dbReference type="InterPro" id="IPR047676">
    <property type="entry name" value="FxLYD_dom"/>
</dbReference>
<dbReference type="NCBIfam" id="NF038353">
    <property type="entry name" value="FxLYD_dom"/>
    <property type="match status" value="1"/>
</dbReference>
<dbReference type="PROSITE" id="PS51257">
    <property type="entry name" value="PROKAR_LIPOPROTEIN"/>
    <property type="match status" value="1"/>
</dbReference>
<keyword id="KW-0472">Membrane</keyword>
<keyword id="KW-1185">Reference proteome</keyword>
<keyword id="KW-0812">Transmembrane</keyword>
<keyword id="KW-1133">Transmembrane helix</keyword>